<gene>
    <name evidence="1" type="primary">trpF</name>
    <name type="ordered locus">lpl1266</name>
</gene>
<name>TRPF_LEGPL</name>
<sequence>MNPSRIRVKMCGMTRSEDIQYAIDLGVDAIGLIFYPKSARNVSLEKARIIVNNIPPFVDIVAVLVNPEQSFVQLIINEIPVQLLQFHGEESSEFCRQFNKPFIKAIHPKTAIQIQSAVDEFFDASAILLDTPSDKGRGGTGLTFDWNIIPENLSKPYILAGGLNESNILEAITMCHPYAVDVCSGIEASPGVKDHLKMSRFIKAIWG</sequence>
<protein>
    <recommendedName>
        <fullName evidence="1">N-(5'-phosphoribosyl)anthranilate isomerase</fullName>
        <shortName evidence="1">PRAI</shortName>
        <ecNumber evidence="1">5.3.1.24</ecNumber>
    </recommendedName>
</protein>
<proteinExistence type="inferred from homology"/>
<dbReference type="EC" id="5.3.1.24" evidence="1"/>
<dbReference type="EMBL" id="CR628337">
    <property type="protein sequence ID" value="CAH15506.1"/>
    <property type="molecule type" value="Genomic_DNA"/>
</dbReference>
<dbReference type="RefSeq" id="WP_011215346.1">
    <property type="nucleotide sequence ID" value="NC_006369.1"/>
</dbReference>
<dbReference type="SMR" id="Q5WX33"/>
<dbReference type="KEGG" id="lpf:lpl1266"/>
<dbReference type="LegioList" id="lpl1266"/>
<dbReference type="HOGENOM" id="CLU_076364_2_0_6"/>
<dbReference type="UniPathway" id="UPA00035">
    <property type="reaction ID" value="UER00042"/>
</dbReference>
<dbReference type="Proteomes" id="UP000002517">
    <property type="component" value="Chromosome"/>
</dbReference>
<dbReference type="GO" id="GO:0004640">
    <property type="term" value="F:phosphoribosylanthranilate isomerase activity"/>
    <property type="evidence" value="ECO:0007669"/>
    <property type="project" value="UniProtKB-UniRule"/>
</dbReference>
<dbReference type="GO" id="GO:0000162">
    <property type="term" value="P:L-tryptophan biosynthetic process"/>
    <property type="evidence" value="ECO:0007669"/>
    <property type="project" value="UniProtKB-UniRule"/>
</dbReference>
<dbReference type="CDD" id="cd00405">
    <property type="entry name" value="PRAI"/>
    <property type="match status" value="1"/>
</dbReference>
<dbReference type="FunFam" id="3.20.20.70:FF:000075">
    <property type="entry name" value="Tryptophan biosynthesis protein TRP1"/>
    <property type="match status" value="1"/>
</dbReference>
<dbReference type="Gene3D" id="3.20.20.70">
    <property type="entry name" value="Aldolase class I"/>
    <property type="match status" value="1"/>
</dbReference>
<dbReference type="HAMAP" id="MF_00135">
    <property type="entry name" value="PRAI"/>
    <property type="match status" value="1"/>
</dbReference>
<dbReference type="InterPro" id="IPR013785">
    <property type="entry name" value="Aldolase_TIM"/>
</dbReference>
<dbReference type="InterPro" id="IPR001240">
    <property type="entry name" value="PRAI_dom"/>
</dbReference>
<dbReference type="InterPro" id="IPR011060">
    <property type="entry name" value="RibuloseP-bd_barrel"/>
</dbReference>
<dbReference type="InterPro" id="IPR044643">
    <property type="entry name" value="TrpF_fam"/>
</dbReference>
<dbReference type="NCBIfam" id="NF002298">
    <property type="entry name" value="PRK01222.1-4"/>
    <property type="match status" value="1"/>
</dbReference>
<dbReference type="PANTHER" id="PTHR42894">
    <property type="entry name" value="N-(5'-PHOSPHORIBOSYL)ANTHRANILATE ISOMERASE"/>
    <property type="match status" value="1"/>
</dbReference>
<dbReference type="PANTHER" id="PTHR42894:SF1">
    <property type="entry name" value="N-(5'-PHOSPHORIBOSYL)ANTHRANILATE ISOMERASE"/>
    <property type="match status" value="1"/>
</dbReference>
<dbReference type="Pfam" id="PF00697">
    <property type="entry name" value="PRAI"/>
    <property type="match status" value="1"/>
</dbReference>
<dbReference type="SUPFAM" id="SSF51366">
    <property type="entry name" value="Ribulose-phoshate binding barrel"/>
    <property type="match status" value="1"/>
</dbReference>
<comment type="catalytic activity">
    <reaction evidence="1">
        <text>N-(5-phospho-beta-D-ribosyl)anthranilate = 1-(2-carboxyphenylamino)-1-deoxy-D-ribulose 5-phosphate</text>
        <dbReference type="Rhea" id="RHEA:21540"/>
        <dbReference type="ChEBI" id="CHEBI:18277"/>
        <dbReference type="ChEBI" id="CHEBI:58613"/>
        <dbReference type="EC" id="5.3.1.24"/>
    </reaction>
</comment>
<comment type="pathway">
    <text evidence="1">Amino-acid biosynthesis; L-tryptophan biosynthesis; L-tryptophan from chorismate: step 3/5.</text>
</comment>
<comment type="similarity">
    <text evidence="1">Belongs to the TrpF family.</text>
</comment>
<evidence type="ECO:0000255" key="1">
    <source>
        <dbReference type="HAMAP-Rule" id="MF_00135"/>
    </source>
</evidence>
<reference key="1">
    <citation type="journal article" date="2004" name="Nat. Genet.">
        <title>Evidence in the Legionella pneumophila genome for exploitation of host cell functions and high genome plasticity.</title>
        <authorList>
            <person name="Cazalet C."/>
            <person name="Rusniok C."/>
            <person name="Brueggemann H."/>
            <person name="Zidane N."/>
            <person name="Magnier A."/>
            <person name="Ma L."/>
            <person name="Tichit M."/>
            <person name="Jarraud S."/>
            <person name="Bouchier C."/>
            <person name="Vandenesch F."/>
            <person name="Kunst F."/>
            <person name="Etienne J."/>
            <person name="Glaser P."/>
            <person name="Buchrieser C."/>
        </authorList>
    </citation>
    <scope>NUCLEOTIDE SEQUENCE [LARGE SCALE GENOMIC DNA]</scope>
    <source>
        <strain>Lens</strain>
    </source>
</reference>
<feature type="chain" id="PRO_1000018604" description="N-(5'-phosphoribosyl)anthranilate isomerase">
    <location>
        <begin position="1"/>
        <end position="207"/>
    </location>
</feature>
<accession>Q5WX33</accession>
<organism>
    <name type="scientific">Legionella pneumophila (strain Lens)</name>
    <dbReference type="NCBI Taxonomy" id="297245"/>
    <lineage>
        <taxon>Bacteria</taxon>
        <taxon>Pseudomonadati</taxon>
        <taxon>Pseudomonadota</taxon>
        <taxon>Gammaproteobacteria</taxon>
        <taxon>Legionellales</taxon>
        <taxon>Legionellaceae</taxon>
        <taxon>Legionella</taxon>
    </lineage>
</organism>
<keyword id="KW-0028">Amino-acid biosynthesis</keyword>
<keyword id="KW-0057">Aromatic amino acid biosynthesis</keyword>
<keyword id="KW-0413">Isomerase</keyword>
<keyword id="KW-0822">Tryptophan biosynthesis</keyword>